<name>RECR_SALTI</name>
<protein>
    <recommendedName>
        <fullName evidence="1">Recombination protein RecR</fullName>
    </recommendedName>
</protein>
<keyword id="KW-0227">DNA damage</keyword>
<keyword id="KW-0233">DNA recombination</keyword>
<keyword id="KW-0234">DNA repair</keyword>
<keyword id="KW-0479">Metal-binding</keyword>
<keyword id="KW-0862">Zinc</keyword>
<keyword id="KW-0863">Zinc-finger</keyword>
<accession>P65993</accession>
<accession>Q8XG25</accession>
<reference key="1">
    <citation type="journal article" date="2001" name="Nature">
        <title>Complete genome sequence of a multiple drug resistant Salmonella enterica serovar Typhi CT18.</title>
        <authorList>
            <person name="Parkhill J."/>
            <person name="Dougan G."/>
            <person name="James K.D."/>
            <person name="Thomson N.R."/>
            <person name="Pickard D."/>
            <person name="Wain J."/>
            <person name="Churcher C.M."/>
            <person name="Mungall K.L."/>
            <person name="Bentley S.D."/>
            <person name="Holden M.T.G."/>
            <person name="Sebaihia M."/>
            <person name="Baker S."/>
            <person name="Basham D."/>
            <person name="Brooks K."/>
            <person name="Chillingworth T."/>
            <person name="Connerton P."/>
            <person name="Cronin A."/>
            <person name="Davis P."/>
            <person name="Davies R.M."/>
            <person name="Dowd L."/>
            <person name="White N."/>
            <person name="Farrar J."/>
            <person name="Feltwell T."/>
            <person name="Hamlin N."/>
            <person name="Haque A."/>
            <person name="Hien T.T."/>
            <person name="Holroyd S."/>
            <person name="Jagels K."/>
            <person name="Krogh A."/>
            <person name="Larsen T.S."/>
            <person name="Leather S."/>
            <person name="Moule S."/>
            <person name="O'Gaora P."/>
            <person name="Parry C."/>
            <person name="Quail M.A."/>
            <person name="Rutherford K.M."/>
            <person name="Simmonds M."/>
            <person name="Skelton J."/>
            <person name="Stevens K."/>
            <person name="Whitehead S."/>
            <person name="Barrell B.G."/>
        </authorList>
    </citation>
    <scope>NUCLEOTIDE SEQUENCE [LARGE SCALE GENOMIC DNA]</scope>
    <source>
        <strain>CT18</strain>
    </source>
</reference>
<reference key="2">
    <citation type="journal article" date="2003" name="J. Bacteriol.">
        <title>Comparative genomics of Salmonella enterica serovar Typhi strains Ty2 and CT18.</title>
        <authorList>
            <person name="Deng W."/>
            <person name="Liou S.-R."/>
            <person name="Plunkett G. III"/>
            <person name="Mayhew G.F."/>
            <person name="Rose D.J."/>
            <person name="Burland V."/>
            <person name="Kodoyianni V."/>
            <person name="Schwartz D.C."/>
            <person name="Blattner F.R."/>
        </authorList>
    </citation>
    <scope>NUCLEOTIDE SEQUENCE [LARGE SCALE GENOMIC DNA]</scope>
    <source>
        <strain>ATCC 700931 / Ty2</strain>
    </source>
</reference>
<gene>
    <name evidence="1" type="primary">recR</name>
    <name type="ordered locus">STY0530</name>
    <name type="ordered locus">t2374</name>
</gene>
<sequence>MQTSPLLTQLMEALRCLPGVGPKSAQRMAFTLLQRDRSGGMRLAQALTRAMSEIGHCADCRTFTEQDVCNICSNPRRQENGQICVVESPADIYAIEQTGQFSGRYFVLMGHLSPLDGIGPDDIGLDRLEQRLASEKISELILATNPTVEGEATANYIAELCAEAGVEASRIAHGVPVGGELEMVDGTTLSHSLAGRHKIIF</sequence>
<dbReference type="EMBL" id="AL513382">
    <property type="protein sequence ID" value="CAD04971.1"/>
    <property type="molecule type" value="Genomic_DNA"/>
</dbReference>
<dbReference type="EMBL" id="AE014613">
    <property type="protein sequence ID" value="AAO69965.1"/>
    <property type="molecule type" value="Genomic_DNA"/>
</dbReference>
<dbReference type="RefSeq" id="NP_455082.1">
    <property type="nucleotide sequence ID" value="NC_003198.1"/>
</dbReference>
<dbReference type="RefSeq" id="WP_001195023.1">
    <property type="nucleotide sequence ID" value="NZ_WSUR01000008.1"/>
</dbReference>
<dbReference type="SMR" id="P65993"/>
<dbReference type="STRING" id="220341.gene:17584551"/>
<dbReference type="KEGG" id="stt:t2374"/>
<dbReference type="KEGG" id="sty:STY0530"/>
<dbReference type="PATRIC" id="fig|220341.7.peg.532"/>
<dbReference type="eggNOG" id="COG0353">
    <property type="taxonomic scope" value="Bacteria"/>
</dbReference>
<dbReference type="HOGENOM" id="CLU_060739_1_2_6"/>
<dbReference type="OMA" id="DVMAIEN"/>
<dbReference type="OrthoDB" id="9802672at2"/>
<dbReference type="Proteomes" id="UP000000541">
    <property type="component" value="Chromosome"/>
</dbReference>
<dbReference type="Proteomes" id="UP000002670">
    <property type="component" value="Chromosome"/>
</dbReference>
<dbReference type="GO" id="GO:0003677">
    <property type="term" value="F:DNA binding"/>
    <property type="evidence" value="ECO:0007669"/>
    <property type="project" value="UniProtKB-UniRule"/>
</dbReference>
<dbReference type="GO" id="GO:0008270">
    <property type="term" value="F:zinc ion binding"/>
    <property type="evidence" value="ECO:0007669"/>
    <property type="project" value="UniProtKB-KW"/>
</dbReference>
<dbReference type="GO" id="GO:0006310">
    <property type="term" value="P:DNA recombination"/>
    <property type="evidence" value="ECO:0007669"/>
    <property type="project" value="UniProtKB-UniRule"/>
</dbReference>
<dbReference type="GO" id="GO:0006281">
    <property type="term" value="P:DNA repair"/>
    <property type="evidence" value="ECO:0007669"/>
    <property type="project" value="UniProtKB-UniRule"/>
</dbReference>
<dbReference type="CDD" id="cd01025">
    <property type="entry name" value="TOPRIM_recR"/>
    <property type="match status" value="1"/>
</dbReference>
<dbReference type="FunFam" id="1.10.8.420:FF:000001">
    <property type="entry name" value="Recombination protein RecR"/>
    <property type="match status" value="1"/>
</dbReference>
<dbReference type="FunFam" id="3.40.1360.10:FF:000001">
    <property type="entry name" value="Recombination protein RecR"/>
    <property type="match status" value="1"/>
</dbReference>
<dbReference type="Gene3D" id="3.40.1360.10">
    <property type="match status" value="1"/>
</dbReference>
<dbReference type="Gene3D" id="6.10.250.240">
    <property type="match status" value="1"/>
</dbReference>
<dbReference type="Gene3D" id="1.10.8.420">
    <property type="entry name" value="RecR Domain 1"/>
    <property type="match status" value="1"/>
</dbReference>
<dbReference type="HAMAP" id="MF_00017">
    <property type="entry name" value="RecR"/>
    <property type="match status" value="1"/>
</dbReference>
<dbReference type="InterPro" id="IPR000093">
    <property type="entry name" value="DNA_Rcmb_RecR"/>
</dbReference>
<dbReference type="InterPro" id="IPR023627">
    <property type="entry name" value="Rcmb_RecR"/>
</dbReference>
<dbReference type="InterPro" id="IPR015967">
    <property type="entry name" value="Rcmb_RecR_Znf"/>
</dbReference>
<dbReference type="InterPro" id="IPR006171">
    <property type="entry name" value="TOPRIM_dom"/>
</dbReference>
<dbReference type="InterPro" id="IPR034137">
    <property type="entry name" value="TOPRIM_RecR"/>
</dbReference>
<dbReference type="NCBIfam" id="TIGR00615">
    <property type="entry name" value="recR"/>
    <property type="match status" value="1"/>
</dbReference>
<dbReference type="PANTHER" id="PTHR30446">
    <property type="entry name" value="RECOMBINATION PROTEIN RECR"/>
    <property type="match status" value="1"/>
</dbReference>
<dbReference type="PANTHER" id="PTHR30446:SF0">
    <property type="entry name" value="RECOMBINATION PROTEIN RECR"/>
    <property type="match status" value="1"/>
</dbReference>
<dbReference type="Pfam" id="PF21175">
    <property type="entry name" value="RecR_C"/>
    <property type="match status" value="1"/>
</dbReference>
<dbReference type="Pfam" id="PF21176">
    <property type="entry name" value="RecR_HhH"/>
    <property type="match status" value="1"/>
</dbReference>
<dbReference type="Pfam" id="PF02132">
    <property type="entry name" value="RecR_ZnF"/>
    <property type="match status" value="1"/>
</dbReference>
<dbReference type="Pfam" id="PF13662">
    <property type="entry name" value="Toprim_4"/>
    <property type="match status" value="1"/>
</dbReference>
<dbReference type="SMART" id="SM00493">
    <property type="entry name" value="TOPRIM"/>
    <property type="match status" value="1"/>
</dbReference>
<dbReference type="SUPFAM" id="SSF111304">
    <property type="entry name" value="Recombination protein RecR"/>
    <property type="match status" value="1"/>
</dbReference>
<dbReference type="PROSITE" id="PS01300">
    <property type="entry name" value="RECR"/>
    <property type="match status" value="1"/>
</dbReference>
<dbReference type="PROSITE" id="PS50880">
    <property type="entry name" value="TOPRIM"/>
    <property type="match status" value="1"/>
</dbReference>
<feature type="chain" id="PRO_0000190380" description="Recombination protein RecR">
    <location>
        <begin position="1"/>
        <end position="201"/>
    </location>
</feature>
<feature type="domain" description="Toprim" evidence="1">
    <location>
        <begin position="81"/>
        <end position="176"/>
    </location>
</feature>
<feature type="zinc finger region" description="C4-type" evidence="1">
    <location>
        <begin position="57"/>
        <end position="72"/>
    </location>
</feature>
<proteinExistence type="inferred from homology"/>
<organism>
    <name type="scientific">Salmonella typhi</name>
    <dbReference type="NCBI Taxonomy" id="90370"/>
    <lineage>
        <taxon>Bacteria</taxon>
        <taxon>Pseudomonadati</taxon>
        <taxon>Pseudomonadota</taxon>
        <taxon>Gammaproteobacteria</taxon>
        <taxon>Enterobacterales</taxon>
        <taxon>Enterobacteriaceae</taxon>
        <taxon>Salmonella</taxon>
    </lineage>
</organism>
<evidence type="ECO:0000255" key="1">
    <source>
        <dbReference type="HAMAP-Rule" id="MF_00017"/>
    </source>
</evidence>
<comment type="function">
    <text evidence="1">May play a role in DNA repair. It seems to be involved in an RecBC-independent recombinational process of DNA repair. It may act with RecF and RecO.</text>
</comment>
<comment type="similarity">
    <text evidence="1">Belongs to the RecR family.</text>
</comment>